<organism>
    <name type="scientific">Methanococcus maripaludis (strain DSM 14266 / JCM 13030 / NBRC 101832 / S2 / LL)</name>
    <dbReference type="NCBI Taxonomy" id="267377"/>
    <lineage>
        <taxon>Archaea</taxon>
        <taxon>Methanobacteriati</taxon>
        <taxon>Methanobacteriota</taxon>
        <taxon>Methanomada group</taxon>
        <taxon>Methanococci</taxon>
        <taxon>Methanococcales</taxon>
        <taxon>Methanococcaceae</taxon>
        <taxon>Methanococcus</taxon>
    </lineage>
</organism>
<evidence type="ECO:0000255" key="1">
    <source>
        <dbReference type="HAMAP-Rule" id="MF_01643"/>
    </source>
</evidence>
<keyword id="KW-0067">ATP-binding</keyword>
<keyword id="KW-0436">Ligase</keyword>
<keyword id="KW-0460">Magnesium</keyword>
<keyword id="KW-0479">Metal-binding</keyword>
<keyword id="KW-0547">Nucleotide-binding</keyword>
<keyword id="KW-0658">Purine biosynthesis</keyword>
<keyword id="KW-1185">Reference proteome</keyword>
<name>PURT_METMP</name>
<sequence length="388" mass="42908">MVGTPLFSNAKKILLLGSGELGKEVIIEAQRFGVECIAVDSYENAPAMQVAHKYHIIDMKDAGALRAVIEKEKPDLIVPEIEAINTDTLKEMESEGYHVVPTANATKLTMDREGIRRLAFEKLGLRTAKYEFAENLEELKEAVTRIGIPCIIKPIMSSSGKGQSTIKSESDIKTAWNYAKSAARGIGTKVIVEEFIKFDYEITLLTARTAEGTRFCEPIGHIQVDGDYHESWQPHPMCAPTKAKAQEMAKKITDELGGYGIFGVELFVLDDEVIFSEVSPRPHDTGMVTMVTQKMSEFEIHARAILGLPVNVDIVSPGASHVIKSEILKWAPEYEIHEASKVKDTKIRLFGKPIAKVGRRMGVALAVSDDVIKAREHAEKVAHLVKIK</sequence>
<comment type="function">
    <text evidence="1">Involved in the de novo purine biosynthesis. Catalyzes the transfer of formate to 5-phospho-ribosyl-glycinamide (GAR), producing 5-phospho-ribosyl-N-formylglycinamide (FGAR). Formate is provided by PurU via hydrolysis of 10-formyl-tetrahydrofolate.</text>
</comment>
<comment type="catalytic activity">
    <reaction evidence="1">
        <text>N(1)-(5-phospho-beta-D-ribosyl)glycinamide + formate + ATP = N(2)-formyl-N(1)-(5-phospho-beta-D-ribosyl)glycinamide + ADP + phosphate + H(+)</text>
        <dbReference type="Rhea" id="RHEA:24829"/>
        <dbReference type="ChEBI" id="CHEBI:15378"/>
        <dbReference type="ChEBI" id="CHEBI:15740"/>
        <dbReference type="ChEBI" id="CHEBI:30616"/>
        <dbReference type="ChEBI" id="CHEBI:43474"/>
        <dbReference type="ChEBI" id="CHEBI:143788"/>
        <dbReference type="ChEBI" id="CHEBI:147286"/>
        <dbReference type="ChEBI" id="CHEBI:456216"/>
        <dbReference type="EC" id="6.3.1.21"/>
    </reaction>
    <physiologicalReaction direction="left-to-right" evidence="1">
        <dbReference type="Rhea" id="RHEA:24830"/>
    </physiologicalReaction>
</comment>
<comment type="pathway">
    <text evidence="1">Purine metabolism; IMP biosynthesis via de novo pathway; N(2)-formyl-N(1)-(5-phospho-D-ribosyl)glycinamide from N(1)-(5-phospho-D-ribosyl)glycinamide (formate route): step 1/1.</text>
</comment>
<comment type="subunit">
    <text evidence="1">Homodimer.</text>
</comment>
<comment type="similarity">
    <text evidence="1">Belongs to the PurK/PurT family.</text>
</comment>
<protein>
    <recommendedName>
        <fullName evidence="1">Formate-dependent phosphoribosylglycinamide formyltransferase</fullName>
        <ecNumber evidence="1">6.3.1.21</ecNumber>
    </recommendedName>
    <alternativeName>
        <fullName evidence="1">5'-phosphoribosylglycinamide transformylase 2</fullName>
    </alternativeName>
    <alternativeName>
        <fullName evidence="1">Formate-dependent GAR transformylase</fullName>
    </alternativeName>
    <alternativeName>
        <fullName evidence="1">GAR transformylase 2</fullName>
        <shortName evidence="1">GART 2</shortName>
    </alternativeName>
    <alternativeName>
        <fullName evidence="1">Non-folate glycinamide ribonucleotide transformylase</fullName>
    </alternativeName>
    <alternativeName>
        <fullName evidence="1">Phosphoribosylglycinamide formyltransferase 2</fullName>
    </alternativeName>
</protein>
<accession>Q6M0Z5</accession>
<reference key="1">
    <citation type="journal article" date="2004" name="J. Bacteriol.">
        <title>Complete genome sequence of the genetically tractable hydrogenotrophic methanogen Methanococcus maripaludis.</title>
        <authorList>
            <person name="Hendrickson E.L."/>
            <person name="Kaul R."/>
            <person name="Zhou Y."/>
            <person name="Bovee D."/>
            <person name="Chapman P."/>
            <person name="Chung J."/>
            <person name="Conway de Macario E."/>
            <person name="Dodsworth J.A."/>
            <person name="Gillett W."/>
            <person name="Graham D.E."/>
            <person name="Hackett M."/>
            <person name="Haydock A.K."/>
            <person name="Kang A."/>
            <person name="Land M.L."/>
            <person name="Levy R."/>
            <person name="Lie T.J."/>
            <person name="Major T.A."/>
            <person name="Moore B.C."/>
            <person name="Porat I."/>
            <person name="Palmeiri A."/>
            <person name="Rouse G."/>
            <person name="Saenphimmachak C."/>
            <person name="Soell D."/>
            <person name="Van Dien S."/>
            <person name="Wang T."/>
            <person name="Whitman W.B."/>
            <person name="Xia Q."/>
            <person name="Zhang Y."/>
            <person name="Larimer F.W."/>
            <person name="Olson M.V."/>
            <person name="Leigh J.A."/>
        </authorList>
    </citation>
    <scope>NUCLEOTIDE SEQUENCE [LARGE SCALE GENOMIC DNA]</scope>
    <source>
        <strain>DSM 14266 / JCM 13030 / NBRC 101832 / S2 / LL</strain>
    </source>
</reference>
<proteinExistence type="inferred from homology"/>
<gene>
    <name evidence="1" type="primary">purT</name>
    <name type="ordered locus">MMP0123</name>
</gene>
<feature type="chain" id="PRO_0000319279" description="Formate-dependent phosphoribosylglycinamide formyltransferase">
    <location>
        <begin position="1"/>
        <end position="388"/>
    </location>
</feature>
<feature type="domain" description="ATP-grasp" evidence="1">
    <location>
        <begin position="117"/>
        <end position="306"/>
    </location>
</feature>
<feature type="binding site" evidence="1">
    <location>
        <begin position="20"/>
        <end position="21"/>
    </location>
    <ligand>
        <name>N(1)-(5-phospho-beta-D-ribosyl)glycinamide</name>
        <dbReference type="ChEBI" id="CHEBI:143788"/>
    </ligand>
</feature>
<feature type="binding site" evidence="1">
    <location>
        <position position="80"/>
    </location>
    <ligand>
        <name>N(1)-(5-phospho-beta-D-ribosyl)glycinamide</name>
        <dbReference type="ChEBI" id="CHEBI:143788"/>
    </ligand>
</feature>
<feature type="binding site" evidence="1">
    <location>
        <position position="112"/>
    </location>
    <ligand>
        <name>ATP</name>
        <dbReference type="ChEBI" id="CHEBI:30616"/>
    </ligand>
</feature>
<feature type="binding site" evidence="1">
    <location>
        <position position="153"/>
    </location>
    <ligand>
        <name>ATP</name>
        <dbReference type="ChEBI" id="CHEBI:30616"/>
    </ligand>
</feature>
<feature type="binding site" evidence="1">
    <location>
        <begin position="158"/>
        <end position="163"/>
    </location>
    <ligand>
        <name>ATP</name>
        <dbReference type="ChEBI" id="CHEBI:30616"/>
    </ligand>
</feature>
<feature type="binding site" evidence="1">
    <location>
        <begin position="193"/>
        <end position="196"/>
    </location>
    <ligand>
        <name>ATP</name>
        <dbReference type="ChEBI" id="CHEBI:30616"/>
    </ligand>
</feature>
<feature type="binding site" evidence="1">
    <location>
        <position position="201"/>
    </location>
    <ligand>
        <name>ATP</name>
        <dbReference type="ChEBI" id="CHEBI:30616"/>
    </ligand>
</feature>
<feature type="binding site" evidence="1">
    <location>
        <position position="265"/>
    </location>
    <ligand>
        <name>Mg(2+)</name>
        <dbReference type="ChEBI" id="CHEBI:18420"/>
    </ligand>
</feature>
<feature type="binding site" evidence="1">
    <location>
        <position position="277"/>
    </location>
    <ligand>
        <name>Mg(2+)</name>
        <dbReference type="ChEBI" id="CHEBI:18420"/>
    </ligand>
</feature>
<feature type="binding site" evidence="1">
    <location>
        <position position="284"/>
    </location>
    <ligand>
        <name>N(1)-(5-phospho-beta-D-ribosyl)glycinamide</name>
        <dbReference type="ChEBI" id="CHEBI:143788"/>
    </ligand>
</feature>
<feature type="binding site" evidence="1">
    <location>
        <position position="352"/>
    </location>
    <ligand>
        <name>N(1)-(5-phospho-beta-D-ribosyl)glycinamide</name>
        <dbReference type="ChEBI" id="CHEBI:143788"/>
    </ligand>
</feature>
<feature type="binding site" evidence="1">
    <location>
        <begin position="359"/>
        <end position="360"/>
    </location>
    <ligand>
        <name>N(1)-(5-phospho-beta-D-ribosyl)glycinamide</name>
        <dbReference type="ChEBI" id="CHEBI:143788"/>
    </ligand>
</feature>
<dbReference type="EC" id="6.3.1.21" evidence="1"/>
<dbReference type="EMBL" id="BX950229">
    <property type="protein sequence ID" value="CAF29679.1"/>
    <property type="molecule type" value="Genomic_DNA"/>
</dbReference>
<dbReference type="RefSeq" id="WP_011170067.1">
    <property type="nucleotide sequence ID" value="NC_005791.1"/>
</dbReference>
<dbReference type="SMR" id="Q6M0Z5"/>
<dbReference type="STRING" id="267377.MMP0123"/>
<dbReference type="EnsemblBacteria" id="CAF29679">
    <property type="protein sequence ID" value="CAF29679"/>
    <property type="gene ID" value="MMP0123"/>
</dbReference>
<dbReference type="GeneID" id="2762130"/>
<dbReference type="KEGG" id="mmp:MMP0123"/>
<dbReference type="PATRIC" id="fig|267377.15.peg.124"/>
<dbReference type="eggNOG" id="arCOG01598">
    <property type="taxonomic scope" value="Archaea"/>
</dbReference>
<dbReference type="HOGENOM" id="CLU_011534_1_3_2"/>
<dbReference type="OrthoDB" id="9299at2157"/>
<dbReference type="UniPathway" id="UPA00074">
    <property type="reaction ID" value="UER00127"/>
</dbReference>
<dbReference type="Proteomes" id="UP000000590">
    <property type="component" value="Chromosome"/>
</dbReference>
<dbReference type="GO" id="GO:0005829">
    <property type="term" value="C:cytosol"/>
    <property type="evidence" value="ECO:0007669"/>
    <property type="project" value="TreeGrafter"/>
</dbReference>
<dbReference type="GO" id="GO:0005524">
    <property type="term" value="F:ATP binding"/>
    <property type="evidence" value="ECO:0007669"/>
    <property type="project" value="UniProtKB-UniRule"/>
</dbReference>
<dbReference type="GO" id="GO:0000287">
    <property type="term" value="F:magnesium ion binding"/>
    <property type="evidence" value="ECO:0007669"/>
    <property type="project" value="InterPro"/>
</dbReference>
<dbReference type="GO" id="GO:0043815">
    <property type="term" value="F:phosphoribosylglycinamide formyltransferase 2 activity"/>
    <property type="evidence" value="ECO:0007669"/>
    <property type="project" value="UniProtKB-UniRule"/>
</dbReference>
<dbReference type="GO" id="GO:0004644">
    <property type="term" value="F:phosphoribosylglycinamide formyltransferase activity"/>
    <property type="evidence" value="ECO:0007669"/>
    <property type="project" value="InterPro"/>
</dbReference>
<dbReference type="GO" id="GO:0006189">
    <property type="term" value="P:'de novo' IMP biosynthetic process"/>
    <property type="evidence" value="ECO:0007669"/>
    <property type="project" value="UniProtKB-UniRule"/>
</dbReference>
<dbReference type="FunFam" id="3.40.50.20:FF:000007">
    <property type="entry name" value="Formate-dependent phosphoribosylglycinamide formyltransferase"/>
    <property type="match status" value="1"/>
</dbReference>
<dbReference type="Gene3D" id="3.40.50.20">
    <property type="match status" value="1"/>
</dbReference>
<dbReference type="Gene3D" id="3.30.1490.20">
    <property type="entry name" value="ATP-grasp fold, A domain"/>
    <property type="match status" value="1"/>
</dbReference>
<dbReference type="Gene3D" id="3.30.470.20">
    <property type="entry name" value="ATP-grasp fold, B domain"/>
    <property type="match status" value="1"/>
</dbReference>
<dbReference type="HAMAP" id="MF_01643">
    <property type="entry name" value="PurT"/>
    <property type="match status" value="1"/>
</dbReference>
<dbReference type="InterPro" id="IPR011761">
    <property type="entry name" value="ATP-grasp"/>
</dbReference>
<dbReference type="InterPro" id="IPR003135">
    <property type="entry name" value="ATP-grasp_carboxylate-amine"/>
</dbReference>
<dbReference type="InterPro" id="IPR013815">
    <property type="entry name" value="ATP_grasp_subdomain_1"/>
</dbReference>
<dbReference type="InterPro" id="IPR016185">
    <property type="entry name" value="PreATP-grasp_dom_sf"/>
</dbReference>
<dbReference type="InterPro" id="IPR005862">
    <property type="entry name" value="PurT"/>
</dbReference>
<dbReference type="InterPro" id="IPR054350">
    <property type="entry name" value="PurT/PurK_preATP-grasp"/>
</dbReference>
<dbReference type="InterPro" id="IPR048740">
    <property type="entry name" value="PurT_C"/>
</dbReference>
<dbReference type="InterPro" id="IPR011054">
    <property type="entry name" value="Rudment_hybrid_motif"/>
</dbReference>
<dbReference type="NCBIfam" id="NF006766">
    <property type="entry name" value="PRK09288.1"/>
    <property type="match status" value="1"/>
</dbReference>
<dbReference type="NCBIfam" id="TIGR01142">
    <property type="entry name" value="purT"/>
    <property type="match status" value="1"/>
</dbReference>
<dbReference type="PANTHER" id="PTHR43055">
    <property type="entry name" value="FORMATE-DEPENDENT PHOSPHORIBOSYLGLYCINAMIDE FORMYLTRANSFERASE"/>
    <property type="match status" value="1"/>
</dbReference>
<dbReference type="PANTHER" id="PTHR43055:SF1">
    <property type="entry name" value="FORMATE-DEPENDENT PHOSPHORIBOSYLGLYCINAMIDE FORMYLTRANSFERASE"/>
    <property type="match status" value="1"/>
</dbReference>
<dbReference type="Pfam" id="PF02222">
    <property type="entry name" value="ATP-grasp"/>
    <property type="match status" value="1"/>
</dbReference>
<dbReference type="Pfam" id="PF21244">
    <property type="entry name" value="PurT_C"/>
    <property type="match status" value="1"/>
</dbReference>
<dbReference type="Pfam" id="PF22660">
    <property type="entry name" value="RS_preATP-grasp-like"/>
    <property type="match status" value="1"/>
</dbReference>
<dbReference type="SUPFAM" id="SSF56059">
    <property type="entry name" value="Glutathione synthetase ATP-binding domain-like"/>
    <property type="match status" value="1"/>
</dbReference>
<dbReference type="SUPFAM" id="SSF52440">
    <property type="entry name" value="PreATP-grasp domain"/>
    <property type="match status" value="1"/>
</dbReference>
<dbReference type="SUPFAM" id="SSF51246">
    <property type="entry name" value="Rudiment single hybrid motif"/>
    <property type="match status" value="1"/>
</dbReference>
<dbReference type="PROSITE" id="PS50975">
    <property type="entry name" value="ATP_GRASP"/>
    <property type="match status" value="1"/>
</dbReference>